<sequence>MATVPEPINEMMAYYSDENELLFEADGPKQMKSCIQHLDLGSMGDGNIQLQISHQLYNKSFRQVVSVIVAMEKLRNSAYAHVFHDDDLRSILSFIFEEEPVIFETSSDEFLCDAPVQSVKCKLQDREQKSLVLASPCVLKALHLLSQEMSREVVFCMSFVQGEERDNKIPVALGIKDKNLYLSCVKKGDTPTLQLEEVDPKVYPKRNMEKRFVFYKTEIKNTVEFESVLYPNWYISTSQIEERPVFLGHFRGGQDITDFRMETLSP</sequence>
<dbReference type="EMBL" id="AB246783">
    <property type="protein sequence ID" value="BAE76005.1"/>
    <property type="molecule type" value="mRNA"/>
</dbReference>
<dbReference type="RefSeq" id="XP_055395078.1">
    <property type="nucleotide sequence ID" value="XM_055539103.1"/>
</dbReference>
<dbReference type="SMR" id="Q2MH07"/>
<dbReference type="GeneID" id="129622427"/>
<dbReference type="GO" id="GO:0005829">
    <property type="term" value="C:cytosol"/>
    <property type="evidence" value="ECO:0007669"/>
    <property type="project" value="UniProtKB-SubCell"/>
</dbReference>
<dbReference type="GO" id="GO:0005615">
    <property type="term" value="C:extracellular space"/>
    <property type="evidence" value="ECO:0007669"/>
    <property type="project" value="UniProtKB-KW"/>
</dbReference>
<dbReference type="GO" id="GO:0005764">
    <property type="term" value="C:lysosome"/>
    <property type="evidence" value="ECO:0007669"/>
    <property type="project" value="UniProtKB-SubCell"/>
</dbReference>
<dbReference type="GO" id="GO:0005125">
    <property type="term" value="F:cytokine activity"/>
    <property type="evidence" value="ECO:0007669"/>
    <property type="project" value="UniProtKB-KW"/>
</dbReference>
<dbReference type="GO" id="GO:0005178">
    <property type="term" value="F:integrin binding"/>
    <property type="evidence" value="ECO:0000250"/>
    <property type="project" value="UniProtKB"/>
</dbReference>
<dbReference type="GO" id="GO:0005149">
    <property type="term" value="F:interleukin-1 receptor binding"/>
    <property type="evidence" value="ECO:0007669"/>
    <property type="project" value="InterPro"/>
</dbReference>
<dbReference type="GO" id="GO:0071222">
    <property type="term" value="P:cellular response to lipopolysaccharide"/>
    <property type="evidence" value="ECO:0007669"/>
    <property type="project" value="TreeGrafter"/>
</dbReference>
<dbReference type="GO" id="GO:0019221">
    <property type="term" value="P:cytokine-mediated signaling pathway"/>
    <property type="evidence" value="ECO:0007669"/>
    <property type="project" value="TreeGrafter"/>
</dbReference>
<dbReference type="GO" id="GO:0001660">
    <property type="term" value="P:fever generation"/>
    <property type="evidence" value="ECO:0007669"/>
    <property type="project" value="UniProtKB-KW"/>
</dbReference>
<dbReference type="GO" id="GO:0006955">
    <property type="term" value="P:immune response"/>
    <property type="evidence" value="ECO:0007669"/>
    <property type="project" value="InterPro"/>
</dbReference>
<dbReference type="GO" id="GO:0051781">
    <property type="term" value="P:positive regulation of cell division"/>
    <property type="evidence" value="ECO:0007669"/>
    <property type="project" value="UniProtKB-KW"/>
</dbReference>
<dbReference type="GO" id="GO:0033092">
    <property type="term" value="P:positive regulation of immature T cell proliferation in thymus"/>
    <property type="evidence" value="ECO:0007669"/>
    <property type="project" value="TreeGrafter"/>
</dbReference>
<dbReference type="GO" id="GO:2000556">
    <property type="term" value="P:positive regulation of T-helper 1 cell cytokine production"/>
    <property type="evidence" value="ECO:0000250"/>
    <property type="project" value="UniProtKB"/>
</dbReference>
<dbReference type="GO" id="GO:0032729">
    <property type="term" value="P:positive regulation of type II interferon production"/>
    <property type="evidence" value="ECO:0000250"/>
    <property type="project" value="UniProtKB"/>
</dbReference>
<dbReference type="GO" id="GO:0010573">
    <property type="term" value="P:vascular endothelial growth factor production"/>
    <property type="evidence" value="ECO:0000250"/>
    <property type="project" value="UniProtKB"/>
</dbReference>
<dbReference type="CDD" id="cd23296">
    <property type="entry name" value="beta-trefoil_IL1B"/>
    <property type="match status" value="1"/>
</dbReference>
<dbReference type="FunFam" id="2.80.10.50:FF:000027">
    <property type="entry name" value="Interleukin-1 beta"/>
    <property type="match status" value="1"/>
</dbReference>
<dbReference type="Gene3D" id="2.80.10.50">
    <property type="match status" value="1"/>
</dbReference>
<dbReference type="InterPro" id="IPR020877">
    <property type="entry name" value="IL-1_CS"/>
</dbReference>
<dbReference type="InterPro" id="IPR000975">
    <property type="entry name" value="IL-1_fam"/>
</dbReference>
<dbReference type="InterPro" id="IPR003502">
    <property type="entry name" value="IL-1_propep"/>
</dbReference>
<dbReference type="InterPro" id="IPR008996">
    <property type="entry name" value="IL1/FGF"/>
</dbReference>
<dbReference type="PANTHER" id="PTHR10078:SF30">
    <property type="entry name" value="INTERLEUKIN-1 BETA"/>
    <property type="match status" value="1"/>
</dbReference>
<dbReference type="PANTHER" id="PTHR10078">
    <property type="entry name" value="INTERLEUKIN-1 FAMILY MEMBER"/>
    <property type="match status" value="1"/>
</dbReference>
<dbReference type="Pfam" id="PF00340">
    <property type="entry name" value="IL1"/>
    <property type="match status" value="1"/>
</dbReference>
<dbReference type="Pfam" id="PF02394">
    <property type="entry name" value="IL1_propep"/>
    <property type="match status" value="1"/>
</dbReference>
<dbReference type="PRINTS" id="PR00262">
    <property type="entry name" value="IL1HBGF"/>
</dbReference>
<dbReference type="PRINTS" id="PR00264">
    <property type="entry name" value="INTERLEUKIN1"/>
</dbReference>
<dbReference type="PRINTS" id="PR01359">
    <property type="entry name" value="INTRLEUKIN1B"/>
</dbReference>
<dbReference type="PRINTS" id="PR01357">
    <property type="entry name" value="INTRLEUKN1AB"/>
</dbReference>
<dbReference type="SMART" id="SM00125">
    <property type="entry name" value="IL1"/>
    <property type="match status" value="1"/>
</dbReference>
<dbReference type="SUPFAM" id="SSF50353">
    <property type="entry name" value="Cytokine"/>
    <property type="match status" value="1"/>
</dbReference>
<dbReference type="PROSITE" id="PS00253">
    <property type="entry name" value="INTERLEUKIN_1"/>
    <property type="match status" value="1"/>
</dbReference>
<proteinExistence type="evidence at transcript level"/>
<protein>
    <recommendedName>
        <fullName>Interleukin-1 beta</fullName>
        <shortName>IL-1 beta</shortName>
    </recommendedName>
</protein>
<gene>
    <name type="primary">IL1B</name>
</gene>
<evidence type="ECO:0000250" key="1"/>
<evidence type="ECO:0000250" key="2">
    <source>
        <dbReference type="UniProtKB" id="P01584"/>
    </source>
</evidence>
<evidence type="ECO:0000250" key="3">
    <source>
        <dbReference type="UniProtKB" id="P10749"/>
    </source>
</evidence>
<evidence type="ECO:0000305" key="4"/>
<comment type="function">
    <text evidence="2">Potent pro-inflammatory cytokine. Initially discovered as the major endogenous pyrogen, induces prostaglandin synthesis, neutrophil influx and activation, T-cell activation and cytokine production, B-cell activation and antibody production, and fibroblast proliferation and collagen production. Promotes Th17 differentiation of T-cells. Synergizes with IL12/interleukin-12 to induce IFNG synthesis from T-helper 1 (Th1) cells. Plays a role in angiogenesis by inducing VEGF production synergistically with TNF and IL6. Involved in transduction of inflammation downstream of pyroptosis: its mature form is specifically released in the extracellular milieu by passing through the gasdermin-D (GSDMD) pore.</text>
</comment>
<comment type="subunit">
    <text evidence="2">Monomer. In its precursor form, weakly interacts with full-length MEFV; the mature cytokine does not interact at all. Interacts with integrins ITGAV:ITGBV and ITGA5:ITGB1; integrin-binding is required for IL1B signaling. Interacts with cargo receptor TMED10; the interaction is direct and is required for the secretion of IL1B mature form. Interacts with HSP90AB1; the interaction facilitates cargo translocation into the ERGIC. Interacts with HSP90B1; the interaction facilitates cargo translocation into the ERGIC.</text>
</comment>
<comment type="subcellular location">
    <subcellularLocation>
        <location evidence="2">Cytoplasm</location>
        <location evidence="2">Cytosol</location>
    </subcellularLocation>
    <subcellularLocation>
        <location evidence="2">Secreted</location>
    </subcellularLocation>
    <subcellularLocation>
        <location evidence="2">Lysosome</location>
    </subcellularLocation>
    <subcellularLocation>
        <location evidence="3">Secreted</location>
        <location evidence="3">Extracellular exosome</location>
    </subcellularLocation>
    <text evidence="2">The precursor is cytosolic. In response to inflammasome-activating signals, such as ATP for NLRP3 inflammasome or bacterial flagellin for NLRC4 inflammasome, cleaved and secreted. Mature form is secreted and released in the extracellular milieu by passing through the gasdermin-D (GSDMD) pore. In contrast, the precursor form is not released, due to the presence of an acidic region that is proteolytically removed by CASP1 during maturation. The secretion is dependent on protein unfolding and facilitated by the cargo receptor TMED10.</text>
</comment>
<comment type="miscellaneous">
    <text evidence="1">IL1B production occurs in 2 steps, each being controlled by different stimuli. First, inflammatory signals, such as LPS, stimulate the synthesis and promote the accumulation of cytosolic stores of pro-IL1B (priming). Then additional signals are required for inflammasome assembly, leading to CASP1 activation, pro-IL1B processing and eventually secretion of the active cytokine. IL1B processing and secretion are temporarily associated.</text>
</comment>
<comment type="similarity">
    <text evidence="4">Belongs to the IL-1 family.</text>
</comment>
<feature type="propeptide" id="PRO_0000254889">
    <location>
        <begin position="1"/>
        <end position="113"/>
    </location>
</feature>
<feature type="chain" id="PRO_0000254890" description="Interleukin-1 beta">
    <location>
        <begin position="114"/>
        <end position="266"/>
    </location>
</feature>
<feature type="site" description="Important for interaction with integrin" evidence="2">
    <location>
        <position position="168"/>
    </location>
</feature>
<feature type="site" description="Important for interaction with integrin" evidence="2">
    <location>
        <position position="176"/>
    </location>
</feature>
<feature type="site" description="Important for interaction with integrin" evidence="2">
    <location>
        <position position="178"/>
    </location>
</feature>
<feature type="site" description="Important for interaction with integrin" evidence="2">
    <location>
        <position position="187"/>
    </location>
</feature>
<feature type="site" description="Important for interaction with integrin" evidence="2">
    <location>
        <position position="201"/>
    </location>
</feature>
<accession>Q2MH07</accession>
<name>IL1B_BUBCA</name>
<keyword id="KW-0202">Cytokine</keyword>
<keyword id="KW-0963">Cytoplasm</keyword>
<keyword id="KW-0395">Inflammatory response</keyword>
<keyword id="KW-0458">Lysosome</keyword>
<keyword id="KW-0497">Mitogen</keyword>
<keyword id="KW-0666">Pyrogen</keyword>
<keyword id="KW-0964">Secreted</keyword>
<reference key="1">
    <citation type="journal article" date="2007" name="Comp. Immunol. Microbiol. Infect. Dis.">
        <title>Molecular cloning, sequencing and phylogenetic analysis of inflammatory cytokines of swamp type buffalo contrasting with other bubaline breeds.</title>
        <authorList>
            <person name="Mingala C.N."/>
            <person name="Odbileg R."/>
            <person name="Konnai S."/>
            <person name="Ohashi K."/>
            <person name="Onuma M."/>
        </authorList>
    </citation>
    <scope>NUCLEOTIDE SEQUENCE [MRNA]</scope>
</reference>
<organism>
    <name type="scientific">Bubalus carabanensis</name>
    <name type="common">Swamp type water buffalo</name>
    <name type="synonym">Bubalus bubalis carabanensis</name>
    <dbReference type="NCBI Taxonomy" id="3119969"/>
    <lineage>
        <taxon>Eukaryota</taxon>
        <taxon>Metazoa</taxon>
        <taxon>Chordata</taxon>
        <taxon>Craniata</taxon>
        <taxon>Vertebrata</taxon>
        <taxon>Euteleostomi</taxon>
        <taxon>Mammalia</taxon>
        <taxon>Eutheria</taxon>
        <taxon>Laurasiatheria</taxon>
        <taxon>Artiodactyla</taxon>
        <taxon>Ruminantia</taxon>
        <taxon>Pecora</taxon>
        <taxon>Bovidae</taxon>
        <taxon>Bovinae</taxon>
        <taxon>Bubalus</taxon>
    </lineage>
</organism>